<sequence length="457" mass="50634">MDKLNKITVPASQKLRQLQKMVHDIKNNEGGIMDKIKKLKVKGPPSVPRRDYALDNPADEEEQWSDDFDSDYENPDEHSDSEMYVMPAEETGDDSYEPPPAEQQTRVVHPALPFTRGEYVDNRSSQRHSPPFSKTLPSKPSWPSAKARLASTLPAPNSLQKPQVPPKPKDLLEDEADYVVPVEDNDENYIHPRESSPLPAEKAPTVNRSTKPNSSSKHVSPPGTVAGRNSGVWDSKSSLPAAPSPLPRAGKKTATPLKTTPVPSLQNASNVCEEKPVPAERHRGSSHRQDTVQSPVFPPTQKPVLQKPVPLPRFTEGGSPAADGPVPSFPFNSTFADQEAELHGKPWYAGACDRKSAEEALHRSNKDGSFLIRKSSGHDSKQPYTLVAFFNKRVYNIPVRFIEATKQYALGKKKNGEEYFGSVVEIIKNHQHNPLVLIDSQNNTKDSTRLKYAVKVS</sequence>
<evidence type="ECO:0000250" key="1"/>
<evidence type="ECO:0000250" key="2">
    <source>
        <dbReference type="UniProtKB" id="Q8WV28"/>
    </source>
</evidence>
<evidence type="ECO:0000255" key="3">
    <source>
        <dbReference type="PROSITE-ProRule" id="PRU00191"/>
    </source>
</evidence>
<evidence type="ECO:0000256" key="4">
    <source>
        <dbReference type="SAM" id="MobiDB-lite"/>
    </source>
</evidence>
<name>BLNK_RAT</name>
<proteinExistence type="evidence at protein level"/>
<gene>
    <name type="primary">Blnk</name>
</gene>
<comment type="function">
    <text evidence="1">Functions as a central linker protein, downstream of the B-cell receptor (BCR), bridging the SYK kinase to a multitude of signaling pathways and regulating biological outcomes of B-cell function and development. Plays a role in the activation of ERK/EPHB2, MAP kinase p38 and JNK. Modulates AP1 activation. Important for the activation of NF-kappa-B and NFAT. Plays an important role in BCR-mediated PLCG1 and PLCG2 activation and Ca(2+) mobilization and is required for trafficking of the BCR to late endosomes. However, does not seem to be required for pre-BCR-mediated activation of MAP kinase and phosphatidyl-inositol 3 (PI3) kinase signaling. May be required for the RAC1-JNK pathway. Plays a critical role in orchestrating the pro-B cell to pre-B cell transition. May play an important role in BCR-induced B-cell apoptosis (By similarity).</text>
</comment>
<comment type="subunit">
    <text evidence="1 2">Associates with PLCG1, VAV1 and NCK1 in a B-cell antigen receptor-dependent fashion. Interacts with VAV3, PLCG2 and GRB2. Interacts through its SH2 domain with CD79A. Interacts (via SH2 domain) with SYK; phosphorylated and activated by SYK. Interacts (via SH2 domain) with SCIMP; this interaction is dependent on phosphorylation of SCIMP 'Tyr-120' (By similarity).</text>
</comment>
<comment type="subcellular location">
    <subcellularLocation>
        <location evidence="1">Cytoplasm</location>
    </subcellularLocation>
    <subcellularLocation>
        <location evidence="1">Cell membrane</location>
    </subcellularLocation>
    <text evidence="1">BCR activation results in the translocation to membrane fraction.</text>
</comment>
<comment type="PTM">
    <text evidence="1">Following BCR activation, phosphorylated on tyrosine residues by SYK and LYN. When phosphorylated, serves as a scaffold to assemble downstream targets of antigen activation, including PLCG1, VAV1, GRB2 and NCK1. Phosphorylation of Tyr-84, Tyr-178 and Tyr-189 facilitates PLCG1 binding. Phosphorylation of Tyr-96 facilitates BTK binding. Phosphorylation of Tyr-72 facilitates VAV1 and NCK1 binding. Phosphorylation is required for both Ca(2+) and MAPK signaling pathways (By similarity).</text>
</comment>
<organism>
    <name type="scientific">Rattus norvegicus</name>
    <name type="common">Rat</name>
    <dbReference type="NCBI Taxonomy" id="10116"/>
    <lineage>
        <taxon>Eukaryota</taxon>
        <taxon>Metazoa</taxon>
        <taxon>Chordata</taxon>
        <taxon>Craniata</taxon>
        <taxon>Vertebrata</taxon>
        <taxon>Euteleostomi</taxon>
        <taxon>Mammalia</taxon>
        <taxon>Eutheria</taxon>
        <taxon>Euarchontoglires</taxon>
        <taxon>Glires</taxon>
        <taxon>Rodentia</taxon>
        <taxon>Myomorpha</taxon>
        <taxon>Muroidea</taxon>
        <taxon>Muridae</taxon>
        <taxon>Murinae</taxon>
        <taxon>Rattus</taxon>
    </lineage>
</organism>
<accession>Q4KM52</accession>
<reference key="1">
    <citation type="journal article" date="2004" name="Genome Res.">
        <title>The status, quality, and expansion of the NIH full-length cDNA project: the Mammalian Gene Collection (MGC).</title>
        <authorList>
            <consortium name="The MGC Project Team"/>
        </authorList>
    </citation>
    <scope>NUCLEOTIDE SEQUENCE [LARGE SCALE MRNA]</scope>
    <source>
        <tissue>Spleen</tissue>
    </source>
</reference>
<reference key="2">
    <citation type="journal article" date="2012" name="Nat. Commun.">
        <title>Quantitative maps of protein phosphorylation sites across 14 different rat organs and tissues.</title>
        <authorList>
            <person name="Lundby A."/>
            <person name="Secher A."/>
            <person name="Lage K."/>
            <person name="Nordsborg N.B."/>
            <person name="Dmytriyev A."/>
            <person name="Lundby C."/>
            <person name="Olsen J.V."/>
        </authorList>
    </citation>
    <scope>IDENTIFICATION BY MASS SPECTROMETRY [LARGE SCALE ANALYSIS]</scope>
</reference>
<feature type="chain" id="PRO_0000064942" description="B-cell linker protein">
    <location>
        <begin position="1"/>
        <end position="457"/>
    </location>
</feature>
<feature type="domain" description="SH2" evidence="3">
    <location>
        <begin position="347"/>
        <end position="454"/>
    </location>
</feature>
<feature type="region of interest" description="Disordered" evidence="4">
    <location>
        <begin position="38"/>
        <end position="306"/>
    </location>
</feature>
<feature type="compositionally biased region" description="Acidic residues" evidence="4">
    <location>
        <begin position="57"/>
        <end position="74"/>
    </location>
</feature>
<feature type="compositionally biased region" description="Acidic residues" evidence="4">
    <location>
        <begin position="172"/>
        <end position="187"/>
    </location>
</feature>
<feature type="compositionally biased region" description="Polar residues" evidence="4">
    <location>
        <begin position="206"/>
        <end position="218"/>
    </location>
</feature>
<feature type="compositionally biased region" description="Polar residues" evidence="4">
    <location>
        <begin position="256"/>
        <end position="270"/>
    </location>
</feature>
<feature type="compositionally biased region" description="Basic and acidic residues" evidence="4">
    <location>
        <begin position="272"/>
        <end position="290"/>
    </location>
</feature>
<feature type="modified residue" description="Phosphotyrosine; by SYK" evidence="2">
    <location>
        <position position="72"/>
    </location>
</feature>
<feature type="modified residue" description="Phosphotyrosine; by SYK" evidence="2">
    <location>
        <position position="84"/>
    </location>
</feature>
<feature type="modified residue" description="Phosphotyrosine; by SYK" evidence="2">
    <location>
        <position position="96"/>
    </location>
</feature>
<feature type="modified residue" description="Phosphotyrosine; by SYK" evidence="2">
    <location>
        <position position="178"/>
    </location>
</feature>
<feature type="modified residue" description="Phosphotyrosine; by SYK" evidence="2">
    <location>
        <position position="189"/>
    </location>
</feature>
<dbReference type="EMBL" id="BC098790">
    <property type="protein sequence ID" value="AAH98790.1"/>
    <property type="molecule type" value="mRNA"/>
</dbReference>
<dbReference type="RefSeq" id="NP_001020938.1">
    <property type="nucleotide sequence ID" value="NM_001025767.1"/>
</dbReference>
<dbReference type="SMR" id="Q4KM52"/>
<dbReference type="FunCoup" id="Q4KM52">
    <property type="interactions" value="213"/>
</dbReference>
<dbReference type="STRING" id="10116.ENSRNOP00000019014"/>
<dbReference type="iPTMnet" id="Q4KM52"/>
<dbReference type="PhosphoSitePlus" id="Q4KM52"/>
<dbReference type="PaxDb" id="10116-ENSRNOP00000019014"/>
<dbReference type="Ensembl" id="ENSRNOT00000019014.7">
    <property type="protein sequence ID" value="ENSRNOP00000019014.5"/>
    <property type="gene ID" value="ENSRNOG00000013967.8"/>
</dbReference>
<dbReference type="GeneID" id="499356"/>
<dbReference type="KEGG" id="rno:499356"/>
<dbReference type="UCSC" id="RGD:1561933">
    <property type="organism name" value="rat"/>
</dbReference>
<dbReference type="AGR" id="RGD:1561933"/>
<dbReference type="CTD" id="29760"/>
<dbReference type="RGD" id="1561933">
    <property type="gene designation" value="Blnk"/>
</dbReference>
<dbReference type="eggNOG" id="ENOG502QUXR">
    <property type="taxonomic scope" value="Eukaryota"/>
</dbReference>
<dbReference type="GeneTree" id="ENSGT00940000155715"/>
<dbReference type="HOGENOM" id="CLU_043673_0_0_1"/>
<dbReference type="InParanoid" id="Q4KM52"/>
<dbReference type="OMA" id="ELLEDEX"/>
<dbReference type="OrthoDB" id="10044490at2759"/>
<dbReference type="PhylomeDB" id="Q4KM52"/>
<dbReference type="TreeFam" id="TF326567"/>
<dbReference type="Reactome" id="R-RNO-983695">
    <property type="pathway name" value="Antigen activates B Cell Receptor (BCR) leading to generation of second messengers"/>
</dbReference>
<dbReference type="PRO" id="PR:Q4KM52"/>
<dbReference type="Proteomes" id="UP000002494">
    <property type="component" value="Chromosome 1"/>
</dbReference>
<dbReference type="Bgee" id="ENSRNOG00000013967">
    <property type="expression patterns" value="Expressed in spleen and 19 other cell types or tissues"/>
</dbReference>
<dbReference type="GO" id="GO:0005737">
    <property type="term" value="C:cytoplasm"/>
    <property type="evidence" value="ECO:0000266"/>
    <property type="project" value="RGD"/>
</dbReference>
<dbReference type="GO" id="GO:0005829">
    <property type="term" value="C:cytosol"/>
    <property type="evidence" value="ECO:0000266"/>
    <property type="project" value="RGD"/>
</dbReference>
<dbReference type="GO" id="GO:0016020">
    <property type="term" value="C:membrane"/>
    <property type="evidence" value="ECO:0000266"/>
    <property type="project" value="RGD"/>
</dbReference>
<dbReference type="GO" id="GO:0005886">
    <property type="term" value="C:plasma membrane"/>
    <property type="evidence" value="ECO:0007669"/>
    <property type="project" value="UniProtKB-SubCell"/>
</dbReference>
<dbReference type="GO" id="GO:0019899">
    <property type="term" value="F:enzyme binding"/>
    <property type="evidence" value="ECO:0000266"/>
    <property type="project" value="RGD"/>
</dbReference>
<dbReference type="GO" id="GO:0008289">
    <property type="term" value="F:lipid binding"/>
    <property type="evidence" value="ECO:0000266"/>
    <property type="project" value="RGD"/>
</dbReference>
<dbReference type="GO" id="GO:0140693">
    <property type="term" value="F:molecular condensate scaffold activity"/>
    <property type="evidence" value="ECO:0000266"/>
    <property type="project" value="RGD"/>
</dbReference>
<dbReference type="GO" id="GO:0043274">
    <property type="term" value="F:phospholipase binding"/>
    <property type="evidence" value="ECO:0000266"/>
    <property type="project" value="RGD"/>
</dbReference>
<dbReference type="GO" id="GO:0019901">
    <property type="term" value="F:protein kinase binding"/>
    <property type="evidence" value="ECO:0000266"/>
    <property type="project" value="RGD"/>
</dbReference>
<dbReference type="GO" id="GO:1990782">
    <property type="term" value="F:protein tyrosine kinase binding"/>
    <property type="evidence" value="ECO:0000266"/>
    <property type="project" value="RGD"/>
</dbReference>
<dbReference type="GO" id="GO:0042169">
    <property type="term" value="F:SH2 domain binding"/>
    <property type="evidence" value="ECO:0000266"/>
    <property type="project" value="RGD"/>
</dbReference>
<dbReference type="GO" id="GO:0035591">
    <property type="term" value="F:signaling adaptor activity"/>
    <property type="evidence" value="ECO:0000266"/>
    <property type="project" value="RGD"/>
</dbReference>
<dbReference type="GO" id="GO:0042113">
    <property type="term" value="P:B cell activation"/>
    <property type="evidence" value="ECO:0007669"/>
    <property type="project" value="UniProtKB-KW"/>
</dbReference>
<dbReference type="GO" id="GO:0050853">
    <property type="term" value="P:B cell receptor signaling pathway"/>
    <property type="evidence" value="ECO:0000266"/>
    <property type="project" value="RGD"/>
</dbReference>
<dbReference type="GO" id="GO:0007169">
    <property type="term" value="P:cell surface receptor protein tyrosine kinase signaling pathway"/>
    <property type="evidence" value="ECO:0000318"/>
    <property type="project" value="GO_Central"/>
</dbReference>
<dbReference type="GO" id="GO:0035556">
    <property type="term" value="P:intracellular signal transduction"/>
    <property type="evidence" value="ECO:0000266"/>
    <property type="project" value="RGD"/>
</dbReference>
<dbReference type="GO" id="GO:0010628">
    <property type="term" value="P:positive regulation of gene expression"/>
    <property type="evidence" value="ECO:0000266"/>
    <property type="project" value="RGD"/>
</dbReference>
<dbReference type="CDD" id="cd09929">
    <property type="entry name" value="SH2_BLNK_SLP-76"/>
    <property type="match status" value="1"/>
</dbReference>
<dbReference type="FunFam" id="3.30.505.10:FF:000016">
    <property type="entry name" value="B-cell linker protein isoform 2"/>
    <property type="match status" value="1"/>
</dbReference>
<dbReference type="Gene3D" id="3.30.505.10">
    <property type="entry name" value="SH2 domain"/>
    <property type="match status" value="1"/>
</dbReference>
<dbReference type="InterPro" id="IPR051751">
    <property type="entry name" value="Immunoreceptor_sig_adapters"/>
</dbReference>
<dbReference type="InterPro" id="IPR000980">
    <property type="entry name" value="SH2"/>
</dbReference>
<dbReference type="InterPro" id="IPR036860">
    <property type="entry name" value="SH2_dom_sf"/>
</dbReference>
<dbReference type="PANTHER" id="PTHR14098:SF3">
    <property type="entry name" value="B-CELL LINKER PROTEIN"/>
    <property type="match status" value="1"/>
</dbReference>
<dbReference type="PANTHER" id="PTHR14098">
    <property type="entry name" value="SH2 DOMAIN CONTAINING PROTEIN"/>
    <property type="match status" value="1"/>
</dbReference>
<dbReference type="Pfam" id="PF00017">
    <property type="entry name" value="SH2"/>
    <property type="match status" value="1"/>
</dbReference>
<dbReference type="SMART" id="SM00252">
    <property type="entry name" value="SH2"/>
    <property type="match status" value="1"/>
</dbReference>
<dbReference type="SUPFAM" id="SSF55550">
    <property type="entry name" value="SH2 domain"/>
    <property type="match status" value="1"/>
</dbReference>
<dbReference type="PROSITE" id="PS50001">
    <property type="entry name" value="SH2"/>
    <property type="match status" value="1"/>
</dbReference>
<protein>
    <recommendedName>
        <fullName>B-cell linker protein</fullName>
    </recommendedName>
    <alternativeName>
        <fullName>Cytoplasmic adapter protein</fullName>
    </alternativeName>
</protein>
<keyword id="KW-0075">B-cell activation</keyword>
<keyword id="KW-1003">Cell membrane</keyword>
<keyword id="KW-0963">Cytoplasm</keyword>
<keyword id="KW-0472">Membrane</keyword>
<keyword id="KW-0597">Phosphoprotein</keyword>
<keyword id="KW-1185">Reference proteome</keyword>
<keyword id="KW-0727">SH2 domain</keyword>